<organism>
    <name type="scientific">Trichosurus vulpecula</name>
    <name type="common">Brush-tailed possum</name>
    <dbReference type="NCBI Taxonomy" id="9337"/>
    <lineage>
        <taxon>Eukaryota</taxon>
        <taxon>Metazoa</taxon>
        <taxon>Chordata</taxon>
        <taxon>Craniata</taxon>
        <taxon>Vertebrata</taxon>
        <taxon>Euteleostomi</taxon>
        <taxon>Mammalia</taxon>
        <taxon>Metatheria</taxon>
        <taxon>Diprotodontia</taxon>
        <taxon>Phalangeridae</taxon>
        <taxon>Trichosurus</taxon>
    </lineage>
</organism>
<reference key="1">
    <citation type="journal article" date="1998" name="J. Mol. Evol.">
        <title>Phylogenetic analysis of three lipocalin-like proteins present in the milk of Trichosurus vulpecula (Phalangeridae, Marsupialia).</title>
        <authorList>
            <person name="Piotte C.P."/>
            <person name="Hunter A.K."/>
            <person name="Marshall C.J."/>
            <person name="Grigor M.R."/>
        </authorList>
    </citation>
    <scope>NUCLEOTIDE SEQUENCE [MRNA]</scope>
    <source>
        <tissue>Mammary gland</tissue>
    </source>
</reference>
<dbReference type="EMBL" id="U34287">
    <property type="protein sequence ID" value="AAA93179.1"/>
    <property type="molecule type" value="mRNA"/>
</dbReference>
<dbReference type="SMR" id="Q29144"/>
<dbReference type="GO" id="GO:0005615">
    <property type="term" value="C:extracellular space"/>
    <property type="evidence" value="ECO:0007669"/>
    <property type="project" value="TreeGrafter"/>
</dbReference>
<dbReference type="GO" id="GO:0036094">
    <property type="term" value="F:small molecule binding"/>
    <property type="evidence" value="ECO:0007669"/>
    <property type="project" value="InterPro"/>
</dbReference>
<dbReference type="GO" id="GO:0007595">
    <property type="term" value="P:lactation"/>
    <property type="evidence" value="ECO:0007669"/>
    <property type="project" value="UniProtKB-KW"/>
</dbReference>
<dbReference type="CDD" id="cd19414">
    <property type="entry name" value="lipocalin_1_3_4_13-like"/>
    <property type="match status" value="1"/>
</dbReference>
<dbReference type="Gene3D" id="2.40.128.20">
    <property type="match status" value="1"/>
</dbReference>
<dbReference type="InterPro" id="IPR012674">
    <property type="entry name" value="Calycin"/>
</dbReference>
<dbReference type="InterPro" id="IPR002345">
    <property type="entry name" value="Lipocalin"/>
</dbReference>
<dbReference type="InterPro" id="IPR000566">
    <property type="entry name" value="Lipocln_cytosolic_FA-bd_dom"/>
</dbReference>
<dbReference type="InterPro" id="IPR002450">
    <property type="entry name" value="von_Ebner_gland"/>
</dbReference>
<dbReference type="PANTHER" id="PTHR11430">
    <property type="entry name" value="LIPOCALIN"/>
    <property type="match status" value="1"/>
</dbReference>
<dbReference type="PANTHER" id="PTHR11430:SF124">
    <property type="entry name" value="LIPOCALIN 1-LIKE PROTEIN 1-RELATED"/>
    <property type="match status" value="1"/>
</dbReference>
<dbReference type="Pfam" id="PF00061">
    <property type="entry name" value="Lipocalin"/>
    <property type="match status" value="1"/>
</dbReference>
<dbReference type="PRINTS" id="PR01175">
    <property type="entry name" value="VNEBNERGLAND"/>
</dbReference>
<dbReference type="SUPFAM" id="SSF50814">
    <property type="entry name" value="Lipocalins"/>
    <property type="match status" value="1"/>
</dbReference>
<sequence>MKVLFFTIALSLFSILHADDVAFSAFTPSEGTYYVQVIAVDKEFPEEEIPRDMSPLTIMYLDDGKMEARFTMKKDDNCEEINIMLEKTADPRKITMNRRLRYTCAAVRTSKQKHWILVCPREFQGETIRMAKLVGPNTDKNPKALEDFYRFIYRERFDKRRIITPKQTEACAPEHA</sequence>
<feature type="signal peptide" evidence="1">
    <location>
        <begin position="1"/>
        <end position="18"/>
    </location>
</feature>
<feature type="chain" id="PRO_0000017987" description="Late lactation protein">
    <location>
        <begin position="19"/>
        <end position="176"/>
    </location>
</feature>
<feature type="disulfide bond" evidence="1">
    <location>
        <begin position="78"/>
        <end position="171"/>
    </location>
</feature>
<proteinExistence type="evidence at transcript level"/>
<comment type="function">
    <text>Probably serves a role in the transport of a small ligand released during the hydrolysis of milk fat.</text>
</comment>
<comment type="subcellular location">
    <subcellularLocation>
        <location>Secreted</location>
    </subcellularLocation>
</comment>
<comment type="tissue specificity">
    <text>Mammary gland. Secreted in milk.</text>
</comment>
<comment type="developmental stage">
    <text>Produced during the late phase of lactation.</text>
</comment>
<comment type="similarity">
    <text evidence="2">Belongs to the calycin superfamily. Lipocalin family.</text>
</comment>
<accession>Q29144</accession>
<name>LLP_TRIVU</name>
<protein>
    <recommendedName>
        <fullName>Late lactation protein</fullName>
        <shortName>LLP</shortName>
    </recommendedName>
</protein>
<keyword id="KW-1015">Disulfide bond</keyword>
<keyword id="KW-0421">Lactation</keyword>
<keyword id="KW-0494">Milk protein</keyword>
<keyword id="KW-0964">Secreted</keyword>
<keyword id="KW-0732">Signal</keyword>
<keyword id="KW-0813">Transport</keyword>
<evidence type="ECO:0000250" key="1"/>
<evidence type="ECO:0000305" key="2"/>